<feature type="chain" id="PRO_0000383141" description="Probable importin ECU10_0620">
    <location>
        <begin position="1"/>
        <end position="939"/>
    </location>
</feature>
<feature type="domain" description="Importin N-terminal" evidence="2">
    <location>
        <begin position="23"/>
        <end position="90"/>
    </location>
</feature>
<protein>
    <recommendedName>
        <fullName>Probable importin ECU10_0620</fullName>
    </recommendedName>
    <alternativeName>
        <fullName>Probable karyopherin ECU10_0620</fullName>
    </alternativeName>
</protein>
<organism>
    <name type="scientific">Encephalitozoon cuniculi (strain GB-M1)</name>
    <name type="common">Microsporidian parasite</name>
    <dbReference type="NCBI Taxonomy" id="284813"/>
    <lineage>
        <taxon>Eukaryota</taxon>
        <taxon>Fungi</taxon>
        <taxon>Fungi incertae sedis</taxon>
        <taxon>Microsporidia</taxon>
        <taxon>Unikaryonidae</taxon>
        <taxon>Encephalitozoon</taxon>
    </lineage>
</organism>
<keyword id="KW-0963">Cytoplasm</keyword>
<keyword id="KW-0539">Nucleus</keyword>
<keyword id="KW-0653">Protein transport</keyword>
<keyword id="KW-1185">Reference proteome</keyword>
<keyword id="KW-0813">Transport</keyword>
<gene>
    <name type="ordered locus">ECU10_0620</name>
</gene>
<proteinExistence type="evidence at protein level"/>
<reference key="1">
    <citation type="journal article" date="2001" name="Nature">
        <title>Genome sequence and gene compaction of the eukaryote parasite Encephalitozoon cuniculi.</title>
        <authorList>
            <person name="Katinka M.D."/>
            <person name="Duprat S."/>
            <person name="Cornillot E."/>
            <person name="Metenier G."/>
            <person name="Thomarat F."/>
            <person name="Prensier G."/>
            <person name="Barbe V."/>
            <person name="Peyretaillade E."/>
            <person name="Brottier P."/>
            <person name="Wincker P."/>
            <person name="Delbac F."/>
            <person name="El Alaoui H."/>
            <person name="Peyret P."/>
            <person name="Saurin W."/>
            <person name="Gouy M."/>
            <person name="Weissenbach J."/>
            <person name="Vivares C.P."/>
        </authorList>
    </citation>
    <scope>NUCLEOTIDE SEQUENCE [LARGE SCALE GENOMIC DNA]</scope>
    <source>
        <strain>GB-M1</strain>
    </source>
</reference>
<reference key="2">
    <citation type="journal article" date="2006" name="Proteomics">
        <title>Proteomic analysis of the eukaryotic parasite Encephalitozoon cuniculi (microsporidia): a reference map for proteins expressed in late sporogonial stages.</title>
        <authorList>
            <person name="Brosson D."/>
            <person name="Kuhn L."/>
            <person name="Delbac F."/>
            <person name="Garin J."/>
            <person name="Vivares C.P."/>
            <person name="Texier C."/>
        </authorList>
    </citation>
    <scope>IDENTIFICATION BY MASS SPECTROMETRY [LARGE SCALE ANALYSIS]</scope>
    <scope>DEVELOPMENTAL STAGE</scope>
</reference>
<name>IMPO_ENCCU</name>
<accession>Q8SR54</accession>
<sequence length="939" mass="106952">MREETRQIFLQTIDSDAGKRSIAEAMLMDLEKQPGFVMSLPHTCMKDGDPIVKRVAAIYFKNAIIKQWRSNEYSEARKYLVENILDLFLYGDEVTRTAYNAILVNIFNNEKLSDLDGMFRKAAGFMRTSEANHVLTALNMYERVFDAEKIKYNLEQVLGLMFDTAGKDILEKVYGFLESGNYGMVKTGMIVLSKSYCYYSIPDFLSAIGTFSYVFNLSLRILNLEGSNEDLLESKKWAAYFMYKSCSKGIKKFYKKSELSEYITDMNRFQMVYATFLKIIQERSQQTIDIELYAIDFFVLLTSDADFFRYMEPNLSYFISGYILPLYSLSDSEEDDFENDPDKYLREKYNFFGNGLRSSLNTLFCEIISKVKQKEETFQGIISYLLSILGGSKETPSRDNIRAAYGSFFLLASIKSTLMKKARNVLEYIVANHVIPALRGNSCILKSQACYFLSTIEEDLPINGLALEALDNTHKLMKSSHRALMVESTLAMSFFLFNEASSEKFRQLIPETVESILSLSNTYNLEPLTMLLDSIIGYYPEEISKYAPELVGSISRITLSHLMNESDVGEDKQMVVSGFLRSIESLILSLDQRSLVLKYSYVNSYDVISFILKEEKSDFYQEALDILNGYVYMIKEIEGSMWGLFQMVLNLPIDEITVYSTEVADLIDNFITYGKTSVMDAGILGSICSVISKLCLCNEENFLDEDFIGGCRIIESIILNIGNELLSKDPSRLPLFISVAISGEKMIDEDGPAIVYALELIMNCFILRPKETIRILREQKYLQSFFEKLFSQKNKFKRVHDKKICMLFIGTICRLQDGALPELDVHGLGEVLVATVTSLPEAIRLRNQMKDDEDAPPPLVNTEDDQCLDASDISCTDILEEDIYFETELDKFEPFGYISSILSSPASGTYAEKIISTMTDEQKDSLSTVLNGERIIQKI</sequence>
<dbReference type="EMBL" id="AL590449">
    <property type="protein sequence ID" value="CAD25781.1"/>
    <property type="molecule type" value="Genomic_DNA"/>
</dbReference>
<dbReference type="RefSeq" id="NP_586177.1">
    <property type="nucleotide sequence ID" value="NM_001042010.1"/>
</dbReference>
<dbReference type="SMR" id="Q8SR54"/>
<dbReference type="FunCoup" id="Q8SR54">
    <property type="interactions" value="282"/>
</dbReference>
<dbReference type="STRING" id="284813.Q8SR54"/>
<dbReference type="GeneID" id="859826"/>
<dbReference type="KEGG" id="ecu:ECU10_0620"/>
<dbReference type="VEuPathDB" id="MicrosporidiaDB:ECU10_0620"/>
<dbReference type="HOGENOM" id="CLU_013781_0_0_1"/>
<dbReference type="InParanoid" id="Q8SR54"/>
<dbReference type="OMA" id="MVMSMNK"/>
<dbReference type="OrthoDB" id="760868at2759"/>
<dbReference type="Proteomes" id="UP000000819">
    <property type="component" value="Chromosome X"/>
</dbReference>
<dbReference type="GO" id="GO:0005829">
    <property type="term" value="C:cytosol"/>
    <property type="evidence" value="ECO:0007669"/>
    <property type="project" value="TreeGrafter"/>
</dbReference>
<dbReference type="GO" id="GO:0005635">
    <property type="term" value="C:nuclear envelope"/>
    <property type="evidence" value="ECO:0007669"/>
    <property type="project" value="TreeGrafter"/>
</dbReference>
<dbReference type="GO" id="GO:0031267">
    <property type="term" value="F:small GTPase binding"/>
    <property type="evidence" value="ECO:0007669"/>
    <property type="project" value="InterPro"/>
</dbReference>
<dbReference type="GO" id="GO:0006606">
    <property type="term" value="P:protein import into nucleus"/>
    <property type="evidence" value="ECO:0007669"/>
    <property type="project" value="TreeGrafter"/>
</dbReference>
<dbReference type="Gene3D" id="1.25.10.10">
    <property type="entry name" value="Leucine-rich Repeat Variant"/>
    <property type="match status" value="1"/>
</dbReference>
<dbReference type="InterPro" id="IPR011989">
    <property type="entry name" value="ARM-like"/>
</dbReference>
<dbReference type="InterPro" id="IPR016024">
    <property type="entry name" value="ARM-type_fold"/>
</dbReference>
<dbReference type="InterPro" id="IPR001494">
    <property type="entry name" value="Importin-beta_N"/>
</dbReference>
<dbReference type="PANTHER" id="PTHR10997:SF18">
    <property type="entry name" value="D-IMPORTIN 7_RANBP7"/>
    <property type="match status" value="1"/>
</dbReference>
<dbReference type="PANTHER" id="PTHR10997">
    <property type="entry name" value="IMPORTIN-7, 8, 11"/>
    <property type="match status" value="1"/>
</dbReference>
<dbReference type="Pfam" id="PF03810">
    <property type="entry name" value="IBN_N"/>
    <property type="match status" value="1"/>
</dbReference>
<dbReference type="SMART" id="SM00913">
    <property type="entry name" value="IBN_N"/>
    <property type="match status" value="1"/>
</dbReference>
<dbReference type="SUPFAM" id="SSF48371">
    <property type="entry name" value="ARM repeat"/>
    <property type="match status" value="1"/>
</dbReference>
<dbReference type="PROSITE" id="PS50166">
    <property type="entry name" value="IMPORTIN_B_NT"/>
    <property type="match status" value="1"/>
</dbReference>
<evidence type="ECO:0000250" key="1"/>
<evidence type="ECO:0000255" key="2">
    <source>
        <dbReference type="PROSITE-ProRule" id="PRU00115"/>
    </source>
</evidence>
<evidence type="ECO:0000269" key="3">
    <source>
    </source>
</evidence>
<evidence type="ECO:0000305" key="4"/>
<comment type="function">
    <text evidence="1">Active in protein import into the nucleus.</text>
</comment>
<comment type="subcellular location">
    <subcellularLocation>
        <location evidence="1">Nucleus</location>
    </subcellularLocation>
    <subcellularLocation>
        <location evidence="1">Cytoplasm</location>
    </subcellularLocation>
</comment>
<comment type="developmental stage">
    <text evidence="3">Expressed in late sporogonial stages.</text>
</comment>
<comment type="similarity">
    <text evidence="4">Belongs to the importin beta family.</text>
</comment>